<gene>
    <name evidence="1" type="primary">def</name>
    <name type="ordered locus">LGAS_1182</name>
</gene>
<name>DEF_LACGA</name>
<comment type="function">
    <text evidence="1">Removes the formyl group from the N-terminal Met of newly synthesized proteins. Requires at least a dipeptide for an efficient rate of reaction. N-terminal L-methionine is a prerequisite for activity but the enzyme has broad specificity at other positions.</text>
</comment>
<comment type="catalytic activity">
    <reaction evidence="1">
        <text>N-terminal N-formyl-L-methionyl-[peptide] + H2O = N-terminal L-methionyl-[peptide] + formate</text>
        <dbReference type="Rhea" id="RHEA:24420"/>
        <dbReference type="Rhea" id="RHEA-COMP:10639"/>
        <dbReference type="Rhea" id="RHEA-COMP:10640"/>
        <dbReference type="ChEBI" id="CHEBI:15377"/>
        <dbReference type="ChEBI" id="CHEBI:15740"/>
        <dbReference type="ChEBI" id="CHEBI:49298"/>
        <dbReference type="ChEBI" id="CHEBI:64731"/>
        <dbReference type="EC" id="3.5.1.88"/>
    </reaction>
</comment>
<comment type="cofactor">
    <cofactor evidence="1">
        <name>Fe(2+)</name>
        <dbReference type="ChEBI" id="CHEBI:29033"/>
    </cofactor>
    <text evidence="1">Binds 1 Fe(2+) ion.</text>
</comment>
<comment type="similarity">
    <text evidence="1">Belongs to the polypeptide deformylase family.</text>
</comment>
<reference key="1">
    <citation type="journal article" date="2006" name="Proc. Natl. Acad. Sci. U.S.A.">
        <title>Comparative genomics of the lactic acid bacteria.</title>
        <authorList>
            <person name="Makarova K.S."/>
            <person name="Slesarev A."/>
            <person name="Wolf Y.I."/>
            <person name="Sorokin A."/>
            <person name="Mirkin B."/>
            <person name="Koonin E.V."/>
            <person name="Pavlov A."/>
            <person name="Pavlova N."/>
            <person name="Karamychev V."/>
            <person name="Polouchine N."/>
            <person name="Shakhova V."/>
            <person name="Grigoriev I."/>
            <person name="Lou Y."/>
            <person name="Rohksar D."/>
            <person name="Lucas S."/>
            <person name="Huang K."/>
            <person name="Goodstein D.M."/>
            <person name="Hawkins T."/>
            <person name="Plengvidhya V."/>
            <person name="Welker D."/>
            <person name="Hughes J."/>
            <person name="Goh Y."/>
            <person name="Benson A."/>
            <person name="Baldwin K."/>
            <person name="Lee J.-H."/>
            <person name="Diaz-Muniz I."/>
            <person name="Dosti B."/>
            <person name="Smeianov V."/>
            <person name="Wechter W."/>
            <person name="Barabote R."/>
            <person name="Lorca G."/>
            <person name="Altermann E."/>
            <person name="Barrangou R."/>
            <person name="Ganesan B."/>
            <person name="Xie Y."/>
            <person name="Rawsthorne H."/>
            <person name="Tamir D."/>
            <person name="Parker C."/>
            <person name="Breidt F."/>
            <person name="Broadbent J.R."/>
            <person name="Hutkins R."/>
            <person name="O'Sullivan D."/>
            <person name="Steele J."/>
            <person name="Unlu G."/>
            <person name="Saier M.H. Jr."/>
            <person name="Klaenhammer T."/>
            <person name="Richardson P."/>
            <person name="Kozyavkin S."/>
            <person name="Weimer B.C."/>
            <person name="Mills D.A."/>
        </authorList>
    </citation>
    <scope>NUCLEOTIDE SEQUENCE [LARGE SCALE GENOMIC DNA]</scope>
    <source>
        <strain>ATCC 33323 / DSM 20243 / BCRC 14619 / CIP 102991 / JCM 1131 / KCTC 3163 / NCIMB 11718 / NCTC 13722 / AM63</strain>
    </source>
</reference>
<feature type="chain" id="PRO_0000301046" description="Peptide deformylase">
    <location>
        <begin position="1"/>
        <end position="184"/>
    </location>
</feature>
<feature type="active site" evidence="1">
    <location>
        <position position="155"/>
    </location>
</feature>
<feature type="binding site" evidence="1">
    <location>
        <position position="111"/>
    </location>
    <ligand>
        <name>Fe cation</name>
        <dbReference type="ChEBI" id="CHEBI:24875"/>
    </ligand>
</feature>
<feature type="binding site" evidence="1">
    <location>
        <position position="154"/>
    </location>
    <ligand>
        <name>Fe cation</name>
        <dbReference type="ChEBI" id="CHEBI:24875"/>
    </ligand>
</feature>
<feature type="binding site" evidence="1">
    <location>
        <position position="158"/>
    </location>
    <ligand>
        <name>Fe cation</name>
        <dbReference type="ChEBI" id="CHEBI:24875"/>
    </ligand>
</feature>
<evidence type="ECO:0000255" key="1">
    <source>
        <dbReference type="HAMAP-Rule" id="MF_00163"/>
    </source>
</evidence>
<protein>
    <recommendedName>
        <fullName evidence="1">Peptide deformylase</fullName>
        <shortName evidence="1">PDF</shortName>
        <ecNumber evidence="1">3.5.1.88</ecNumber>
    </recommendedName>
    <alternativeName>
        <fullName evidence="1">Polypeptide deformylase</fullName>
    </alternativeName>
</protein>
<organism>
    <name type="scientific">Lactobacillus gasseri (strain ATCC 33323 / DSM 20243 / BCRC 14619 / CIP 102991 / JCM 1131 / KCTC 3163 / NCIMB 11718 / NCTC 13722 / AM63)</name>
    <dbReference type="NCBI Taxonomy" id="324831"/>
    <lineage>
        <taxon>Bacteria</taxon>
        <taxon>Bacillati</taxon>
        <taxon>Bacillota</taxon>
        <taxon>Bacilli</taxon>
        <taxon>Lactobacillales</taxon>
        <taxon>Lactobacillaceae</taxon>
        <taxon>Lactobacillus</taxon>
    </lineage>
</organism>
<dbReference type="EC" id="3.5.1.88" evidence="1"/>
<dbReference type="EMBL" id="CP000413">
    <property type="protein sequence ID" value="ABJ60551.1"/>
    <property type="molecule type" value="Genomic_DNA"/>
</dbReference>
<dbReference type="RefSeq" id="WP_003647123.1">
    <property type="nucleotide sequence ID" value="NZ_WBMG01000002.1"/>
</dbReference>
<dbReference type="SMR" id="Q042S1"/>
<dbReference type="GeneID" id="29638859"/>
<dbReference type="KEGG" id="lga:LGAS_1182"/>
<dbReference type="HOGENOM" id="CLU_061901_4_0_9"/>
<dbReference type="BioCyc" id="LGAS324831:G1G6Y-1178-MONOMER"/>
<dbReference type="Proteomes" id="UP000000664">
    <property type="component" value="Chromosome"/>
</dbReference>
<dbReference type="GO" id="GO:0046872">
    <property type="term" value="F:metal ion binding"/>
    <property type="evidence" value="ECO:0007669"/>
    <property type="project" value="UniProtKB-KW"/>
</dbReference>
<dbReference type="GO" id="GO:0042586">
    <property type="term" value="F:peptide deformylase activity"/>
    <property type="evidence" value="ECO:0007669"/>
    <property type="project" value="UniProtKB-UniRule"/>
</dbReference>
<dbReference type="GO" id="GO:0043686">
    <property type="term" value="P:co-translational protein modification"/>
    <property type="evidence" value="ECO:0007669"/>
    <property type="project" value="TreeGrafter"/>
</dbReference>
<dbReference type="GO" id="GO:0006412">
    <property type="term" value="P:translation"/>
    <property type="evidence" value="ECO:0007669"/>
    <property type="project" value="UniProtKB-UniRule"/>
</dbReference>
<dbReference type="CDD" id="cd00487">
    <property type="entry name" value="Pep_deformylase"/>
    <property type="match status" value="1"/>
</dbReference>
<dbReference type="FunFam" id="3.90.45.10:FF:000002">
    <property type="entry name" value="Peptide deformylase"/>
    <property type="match status" value="1"/>
</dbReference>
<dbReference type="Gene3D" id="3.90.45.10">
    <property type="entry name" value="Peptide deformylase"/>
    <property type="match status" value="1"/>
</dbReference>
<dbReference type="HAMAP" id="MF_00163">
    <property type="entry name" value="Pep_deformylase"/>
    <property type="match status" value="1"/>
</dbReference>
<dbReference type="InterPro" id="IPR023635">
    <property type="entry name" value="Peptide_deformylase"/>
</dbReference>
<dbReference type="InterPro" id="IPR036821">
    <property type="entry name" value="Peptide_deformylase_sf"/>
</dbReference>
<dbReference type="NCBIfam" id="TIGR00079">
    <property type="entry name" value="pept_deformyl"/>
    <property type="match status" value="1"/>
</dbReference>
<dbReference type="PANTHER" id="PTHR10458">
    <property type="entry name" value="PEPTIDE DEFORMYLASE"/>
    <property type="match status" value="1"/>
</dbReference>
<dbReference type="PANTHER" id="PTHR10458:SF8">
    <property type="entry name" value="PEPTIDE DEFORMYLASE 2"/>
    <property type="match status" value="1"/>
</dbReference>
<dbReference type="Pfam" id="PF01327">
    <property type="entry name" value="Pep_deformylase"/>
    <property type="match status" value="1"/>
</dbReference>
<dbReference type="PIRSF" id="PIRSF004749">
    <property type="entry name" value="Pep_def"/>
    <property type="match status" value="1"/>
</dbReference>
<dbReference type="PRINTS" id="PR01576">
    <property type="entry name" value="PDEFORMYLASE"/>
</dbReference>
<dbReference type="SUPFAM" id="SSF56420">
    <property type="entry name" value="Peptide deformylase"/>
    <property type="match status" value="1"/>
</dbReference>
<sequence length="184" mass="20712">MILMHDITRDGNPVLRQVAKPLTFPLADEYKELADEMMQYLINSQDPKIAEKHQLRAGVGLAAPQVGKSIQMAALLVPNDKGEIIFKEVFVNPKIISESVRKACLAEGEGCLSVDKDIEGYVPRPDKLKIHYYTVDGEEKTIRLKDYPAIVASHEIDHLNGHLFYDRINKQNPFDLAEDTIVIS</sequence>
<accession>Q042S1</accession>
<proteinExistence type="inferred from homology"/>
<keyword id="KW-0378">Hydrolase</keyword>
<keyword id="KW-0408">Iron</keyword>
<keyword id="KW-0479">Metal-binding</keyword>
<keyword id="KW-0648">Protein biosynthesis</keyword>